<accession>Q0T8C4</accession>
<reference key="1">
    <citation type="journal article" date="2006" name="BMC Genomics">
        <title>Complete genome sequence of Shigella flexneri 5b and comparison with Shigella flexneri 2a.</title>
        <authorList>
            <person name="Nie H."/>
            <person name="Yang F."/>
            <person name="Zhang X."/>
            <person name="Yang J."/>
            <person name="Chen L."/>
            <person name="Wang J."/>
            <person name="Xiong Z."/>
            <person name="Peng J."/>
            <person name="Sun L."/>
            <person name="Dong J."/>
            <person name="Xue Y."/>
            <person name="Xu X."/>
            <person name="Chen S."/>
            <person name="Yao Z."/>
            <person name="Shen Y."/>
            <person name="Jin Q."/>
        </authorList>
    </citation>
    <scope>NUCLEOTIDE SEQUENCE [LARGE SCALE GENOMIC DNA]</scope>
    <source>
        <strain>8401</strain>
    </source>
</reference>
<organism>
    <name type="scientific">Shigella flexneri serotype 5b (strain 8401)</name>
    <dbReference type="NCBI Taxonomy" id="373384"/>
    <lineage>
        <taxon>Bacteria</taxon>
        <taxon>Pseudomonadati</taxon>
        <taxon>Pseudomonadota</taxon>
        <taxon>Gammaproteobacteria</taxon>
        <taxon>Enterobacterales</taxon>
        <taxon>Enterobacteriaceae</taxon>
        <taxon>Shigella</taxon>
    </lineage>
</organism>
<protein>
    <recommendedName>
        <fullName evidence="1">2-isopropylmalate synthase</fullName>
        <ecNumber evidence="1">2.3.3.13</ecNumber>
    </recommendedName>
    <alternativeName>
        <fullName evidence="1">Alpha-IPM synthase</fullName>
    </alternativeName>
    <alternativeName>
        <fullName evidence="1">Alpha-isopropylmalate synthase</fullName>
    </alternativeName>
</protein>
<keyword id="KW-0028">Amino-acid biosynthesis</keyword>
<keyword id="KW-0100">Branched-chain amino acid biosynthesis</keyword>
<keyword id="KW-0963">Cytoplasm</keyword>
<keyword id="KW-0432">Leucine biosynthesis</keyword>
<keyword id="KW-0464">Manganese</keyword>
<keyword id="KW-0479">Metal-binding</keyword>
<keyword id="KW-0808">Transferase</keyword>
<feature type="chain" id="PRO_1000149298" description="2-isopropylmalate synthase">
    <location>
        <begin position="1"/>
        <end position="523"/>
    </location>
</feature>
<feature type="domain" description="Pyruvate carboxyltransferase" evidence="1">
    <location>
        <begin position="5"/>
        <end position="267"/>
    </location>
</feature>
<feature type="region of interest" description="Regulatory domain" evidence="1">
    <location>
        <begin position="392"/>
        <end position="523"/>
    </location>
</feature>
<feature type="binding site" evidence="1">
    <location>
        <position position="14"/>
    </location>
    <ligand>
        <name>Mn(2+)</name>
        <dbReference type="ChEBI" id="CHEBI:29035"/>
    </ligand>
</feature>
<feature type="binding site" evidence="1">
    <location>
        <position position="202"/>
    </location>
    <ligand>
        <name>Mn(2+)</name>
        <dbReference type="ChEBI" id="CHEBI:29035"/>
    </ligand>
</feature>
<feature type="binding site" evidence="1">
    <location>
        <position position="204"/>
    </location>
    <ligand>
        <name>Mn(2+)</name>
        <dbReference type="ChEBI" id="CHEBI:29035"/>
    </ligand>
</feature>
<feature type="binding site" evidence="1">
    <location>
        <position position="238"/>
    </location>
    <ligand>
        <name>Mn(2+)</name>
        <dbReference type="ChEBI" id="CHEBI:29035"/>
    </ligand>
</feature>
<proteinExistence type="inferred from homology"/>
<gene>
    <name evidence="1" type="primary">leuA</name>
    <name type="ordered locus">SFV_0066</name>
</gene>
<dbReference type="EC" id="2.3.3.13" evidence="1"/>
<dbReference type="EMBL" id="CP000266">
    <property type="protein sequence ID" value="ABF02352.1"/>
    <property type="molecule type" value="Genomic_DNA"/>
</dbReference>
<dbReference type="RefSeq" id="WP_000082860.1">
    <property type="nucleotide sequence ID" value="NC_008258.1"/>
</dbReference>
<dbReference type="SMR" id="Q0T8C4"/>
<dbReference type="KEGG" id="sfv:SFV_0066"/>
<dbReference type="HOGENOM" id="CLU_022158_0_1_6"/>
<dbReference type="UniPathway" id="UPA00048">
    <property type="reaction ID" value="UER00070"/>
</dbReference>
<dbReference type="Proteomes" id="UP000000659">
    <property type="component" value="Chromosome"/>
</dbReference>
<dbReference type="GO" id="GO:0005829">
    <property type="term" value="C:cytosol"/>
    <property type="evidence" value="ECO:0007669"/>
    <property type="project" value="TreeGrafter"/>
</dbReference>
<dbReference type="GO" id="GO:0003852">
    <property type="term" value="F:2-isopropylmalate synthase activity"/>
    <property type="evidence" value="ECO:0007669"/>
    <property type="project" value="UniProtKB-UniRule"/>
</dbReference>
<dbReference type="GO" id="GO:0003985">
    <property type="term" value="F:acetyl-CoA C-acetyltransferase activity"/>
    <property type="evidence" value="ECO:0007669"/>
    <property type="project" value="UniProtKB-UniRule"/>
</dbReference>
<dbReference type="GO" id="GO:0030145">
    <property type="term" value="F:manganese ion binding"/>
    <property type="evidence" value="ECO:0007669"/>
    <property type="project" value="UniProtKB-UniRule"/>
</dbReference>
<dbReference type="GO" id="GO:0009098">
    <property type="term" value="P:L-leucine biosynthetic process"/>
    <property type="evidence" value="ECO:0007669"/>
    <property type="project" value="UniProtKB-UniRule"/>
</dbReference>
<dbReference type="CDD" id="cd07940">
    <property type="entry name" value="DRE_TIM_IPMS"/>
    <property type="match status" value="1"/>
</dbReference>
<dbReference type="FunFam" id="1.10.238.260:FF:000001">
    <property type="entry name" value="2-isopropylmalate synthase"/>
    <property type="match status" value="1"/>
</dbReference>
<dbReference type="FunFam" id="3.20.20.70:FF:000010">
    <property type="entry name" value="2-isopropylmalate synthase"/>
    <property type="match status" value="1"/>
</dbReference>
<dbReference type="FunFam" id="3.30.160.270:FF:000001">
    <property type="entry name" value="2-isopropylmalate synthase"/>
    <property type="match status" value="1"/>
</dbReference>
<dbReference type="Gene3D" id="1.10.238.260">
    <property type="match status" value="1"/>
</dbReference>
<dbReference type="Gene3D" id="3.30.160.270">
    <property type="match status" value="1"/>
</dbReference>
<dbReference type="Gene3D" id="3.20.20.70">
    <property type="entry name" value="Aldolase class I"/>
    <property type="match status" value="1"/>
</dbReference>
<dbReference type="HAMAP" id="MF_01025">
    <property type="entry name" value="LeuA_type1"/>
    <property type="match status" value="1"/>
</dbReference>
<dbReference type="InterPro" id="IPR050073">
    <property type="entry name" value="2-IPM_HCS-like"/>
</dbReference>
<dbReference type="InterPro" id="IPR013709">
    <property type="entry name" value="2-isopropylmalate_synth_dimer"/>
</dbReference>
<dbReference type="InterPro" id="IPR002034">
    <property type="entry name" value="AIPM/Hcit_synth_CS"/>
</dbReference>
<dbReference type="InterPro" id="IPR013785">
    <property type="entry name" value="Aldolase_TIM"/>
</dbReference>
<dbReference type="InterPro" id="IPR054691">
    <property type="entry name" value="LeuA/HCS_post-cat"/>
</dbReference>
<dbReference type="InterPro" id="IPR036230">
    <property type="entry name" value="LeuA_allosteric_dom_sf"/>
</dbReference>
<dbReference type="InterPro" id="IPR005671">
    <property type="entry name" value="LeuA_bact_synth"/>
</dbReference>
<dbReference type="InterPro" id="IPR000891">
    <property type="entry name" value="PYR_CT"/>
</dbReference>
<dbReference type="NCBIfam" id="TIGR00973">
    <property type="entry name" value="leuA_bact"/>
    <property type="match status" value="1"/>
</dbReference>
<dbReference type="NCBIfam" id="NF002084">
    <property type="entry name" value="PRK00915.1-1"/>
    <property type="match status" value="1"/>
</dbReference>
<dbReference type="NCBIfam" id="NF002086">
    <property type="entry name" value="PRK00915.1-3"/>
    <property type="match status" value="1"/>
</dbReference>
<dbReference type="PANTHER" id="PTHR10277:SF9">
    <property type="entry name" value="2-ISOPROPYLMALATE SYNTHASE 1, CHLOROPLASTIC-RELATED"/>
    <property type="match status" value="1"/>
</dbReference>
<dbReference type="PANTHER" id="PTHR10277">
    <property type="entry name" value="HOMOCITRATE SYNTHASE-RELATED"/>
    <property type="match status" value="1"/>
</dbReference>
<dbReference type="Pfam" id="PF22617">
    <property type="entry name" value="HCS_D2"/>
    <property type="match status" value="1"/>
</dbReference>
<dbReference type="Pfam" id="PF00682">
    <property type="entry name" value="HMGL-like"/>
    <property type="match status" value="1"/>
</dbReference>
<dbReference type="Pfam" id="PF08502">
    <property type="entry name" value="LeuA_dimer"/>
    <property type="match status" value="1"/>
</dbReference>
<dbReference type="SMART" id="SM00917">
    <property type="entry name" value="LeuA_dimer"/>
    <property type="match status" value="1"/>
</dbReference>
<dbReference type="SUPFAM" id="SSF110921">
    <property type="entry name" value="2-isopropylmalate synthase LeuA, allosteric (dimerisation) domain"/>
    <property type="match status" value="1"/>
</dbReference>
<dbReference type="SUPFAM" id="SSF51569">
    <property type="entry name" value="Aldolase"/>
    <property type="match status" value="1"/>
</dbReference>
<dbReference type="PROSITE" id="PS00815">
    <property type="entry name" value="AIPM_HOMOCIT_SYNTH_1"/>
    <property type="match status" value="1"/>
</dbReference>
<dbReference type="PROSITE" id="PS00816">
    <property type="entry name" value="AIPM_HOMOCIT_SYNTH_2"/>
    <property type="match status" value="1"/>
</dbReference>
<dbReference type="PROSITE" id="PS50991">
    <property type="entry name" value="PYR_CT"/>
    <property type="match status" value="1"/>
</dbReference>
<name>LEU1_SHIF8</name>
<evidence type="ECO:0000255" key="1">
    <source>
        <dbReference type="HAMAP-Rule" id="MF_01025"/>
    </source>
</evidence>
<comment type="function">
    <text evidence="1">Catalyzes the condensation of the acetyl group of acetyl-CoA with 3-methyl-2-oxobutanoate (2-ketoisovalerate) to form 3-carboxy-3-hydroxy-4-methylpentanoate (2-isopropylmalate).</text>
</comment>
<comment type="catalytic activity">
    <reaction evidence="1">
        <text>3-methyl-2-oxobutanoate + acetyl-CoA + H2O = (2S)-2-isopropylmalate + CoA + H(+)</text>
        <dbReference type="Rhea" id="RHEA:21524"/>
        <dbReference type="ChEBI" id="CHEBI:1178"/>
        <dbReference type="ChEBI" id="CHEBI:11851"/>
        <dbReference type="ChEBI" id="CHEBI:15377"/>
        <dbReference type="ChEBI" id="CHEBI:15378"/>
        <dbReference type="ChEBI" id="CHEBI:57287"/>
        <dbReference type="ChEBI" id="CHEBI:57288"/>
        <dbReference type="EC" id="2.3.3.13"/>
    </reaction>
</comment>
<comment type="cofactor">
    <cofactor evidence="1">
        <name>Mn(2+)</name>
        <dbReference type="ChEBI" id="CHEBI:29035"/>
    </cofactor>
</comment>
<comment type="pathway">
    <text evidence="1">Amino-acid biosynthesis; L-leucine biosynthesis; L-leucine from 3-methyl-2-oxobutanoate: step 1/4.</text>
</comment>
<comment type="subunit">
    <text evidence="1">Homodimer.</text>
</comment>
<comment type="subcellular location">
    <subcellularLocation>
        <location evidence="1">Cytoplasm</location>
    </subcellularLocation>
</comment>
<comment type="similarity">
    <text evidence="1">Belongs to the alpha-IPM synthase/homocitrate synthase family. LeuA type 1 subfamily.</text>
</comment>
<sequence length="523" mass="57226">MSQQVIIFDTTLRDGEQALQASLSVKEKLQIALALERMGVDVMEVGFPVSSPGDFESVQTIARQVKNSRVCALARCVEKDIDVAAESLKVAEAFRIHTFIATSPMHIATKLRSTLDEVIERAIYMVKRARNYTDDVEFSCEDAGRTPIADLARVVEAAINAGATTINIPDTVGYTMPFEFAGIISGLYERVPNIGKAIISVHTHDDLGLAVGNSLAAVHAGARQVEGAMNGIGERAGNCSLEEVIMAIKVRKDILNVHTAINHQEIWRTSQLVSQICNMPIPANKAIVGSGAFAHSSGIHQDGVLKNRENYEIMTPESIGLNQIQLNLTSRSGRAAVKHRMDEMGYKESEYNLDNLYDAFLKLADKKGQVFDYDLEALAFIGKQQEEPEHFRLDYFSVQSGSNDIATAAVKLACGEEVKAEAANGNGPVDAVYQAINRITDYNVELVKYSLTAKGHGKDALGQVDIVANYNGRRFHGVGLATDIVESSAKAMVHVLNNIWRAAEVEKELQRKAQHNENNKETV</sequence>